<accession>Q9TL12</accession>
<reference key="1">
    <citation type="journal article" date="1999" name="Proc. Natl. Acad. Sci. U.S.A.">
        <title>The complete chloroplast DNA sequence of the green alga Nephroselmis olivacea: insights into the architecture of ancestral chloroplast genomes.</title>
        <authorList>
            <person name="Turmel M."/>
            <person name="Otis C."/>
            <person name="Lemieux C."/>
        </authorList>
    </citation>
    <scope>NUCLEOTIDE SEQUENCE [LARGE SCALE GENOMIC DNA]</scope>
    <source>
        <strain>NIES-484 / S-N-5-8</strain>
    </source>
</reference>
<gene>
    <name type="primary">psaI</name>
</gene>
<geneLocation type="chloroplast"/>
<comment type="function">
    <text evidence="1">May help in the organization of the PsaL subunit.</text>
</comment>
<comment type="subcellular location">
    <subcellularLocation>
        <location evidence="1">Plastid</location>
        <location evidence="1">Chloroplast thylakoid membrane</location>
        <topology evidence="1">Single-pass membrane protein</topology>
    </subcellularLocation>
</comment>
<comment type="similarity">
    <text evidence="3">Belongs to the PsaI family.</text>
</comment>
<proteinExistence type="inferred from homology"/>
<dbReference type="EMBL" id="AF137379">
    <property type="protein sequence ID" value="AAD54804.1"/>
    <property type="molecule type" value="Genomic_DNA"/>
</dbReference>
<dbReference type="RefSeq" id="NP_050833.1">
    <property type="nucleotide sequence ID" value="NC_000927.1"/>
</dbReference>
<dbReference type="SMR" id="Q9TL12"/>
<dbReference type="GeneID" id="801937"/>
<dbReference type="GO" id="GO:0009535">
    <property type="term" value="C:chloroplast thylakoid membrane"/>
    <property type="evidence" value="ECO:0007669"/>
    <property type="project" value="UniProtKB-SubCell"/>
</dbReference>
<dbReference type="GO" id="GO:0009522">
    <property type="term" value="C:photosystem I"/>
    <property type="evidence" value="ECO:0007669"/>
    <property type="project" value="UniProtKB-KW"/>
</dbReference>
<dbReference type="GO" id="GO:0015979">
    <property type="term" value="P:photosynthesis"/>
    <property type="evidence" value="ECO:0007669"/>
    <property type="project" value="UniProtKB-UniRule"/>
</dbReference>
<dbReference type="HAMAP" id="MF_00431">
    <property type="entry name" value="PSI_PsaI"/>
    <property type="match status" value="1"/>
</dbReference>
<dbReference type="InterPro" id="IPR001302">
    <property type="entry name" value="PSI_PsaI"/>
</dbReference>
<dbReference type="InterPro" id="IPR036357">
    <property type="entry name" value="PSI_PsaI_sf"/>
</dbReference>
<dbReference type="NCBIfam" id="NF008830">
    <property type="entry name" value="PRK11877.1"/>
    <property type="match status" value="1"/>
</dbReference>
<dbReference type="NCBIfam" id="TIGR03052">
    <property type="entry name" value="PS_I_psaI"/>
    <property type="match status" value="1"/>
</dbReference>
<dbReference type="PANTHER" id="PTHR35775">
    <property type="match status" value="1"/>
</dbReference>
<dbReference type="PANTHER" id="PTHR35775:SF2">
    <property type="entry name" value="PHOTOSYSTEM I REACTION CENTER SUBUNIT VIII"/>
    <property type="match status" value="1"/>
</dbReference>
<dbReference type="Pfam" id="PF00796">
    <property type="entry name" value="PSI_8"/>
    <property type="match status" value="1"/>
</dbReference>
<dbReference type="SUPFAM" id="SSF81540">
    <property type="entry name" value="Subunit VIII of photosystem I reaction centre, PsaI"/>
    <property type="match status" value="1"/>
</dbReference>
<evidence type="ECO:0000250" key="1"/>
<evidence type="ECO:0000255" key="2"/>
<evidence type="ECO:0000305" key="3"/>
<keyword id="KW-0150">Chloroplast</keyword>
<keyword id="KW-0472">Membrane</keyword>
<keyword id="KW-0602">Photosynthesis</keyword>
<keyword id="KW-0603">Photosystem I</keyword>
<keyword id="KW-0934">Plastid</keyword>
<keyword id="KW-0793">Thylakoid</keyword>
<keyword id="KW-0812">Transmembrane</keyword>
<keyword id="KW-1133">Transmembrane helix</keyword>
<sequence length="36" mass="3930">MVTSFLPSLFVPLVGLVFPAVAMASLFLYIEKDEIA</sequence>
<protein>
    <recommendedName>
        <fullName>Photosystem I reaction center subunit VIII</fullName>
        <shortName>PSI-I</shortName>
    </recommendedName>
</protein>
<feature type="chain" id="PRO_0000194661" description="Photosystem I reaction center subunit VIII">
    <location>
        <begin position="1"/>
        <end position="36"/>
    </location>
</feature>
<feature type="transmembrane region" description="Helical" evidence="2">
    <location>
        <begin position="10"/>
        <end position="30"/>
    </location>
</feature>
<organism>
    <name type="scientific">Nephroselmis olivacea</name>
    <name type="common">Green alga</name>
    <dbReference type="NCBI Taxonomy" id="31312"/>
    <lineage>
        <taxon>Eukaryota</taxon>
        <taxon>Viridiplantae</taxon>
        <taxon>Chlorophyta</taxon>
        <taxon>Nephroselmidophyceae</taxon>
        <taxon>Nephroselmidales</taxon>
        <taxon>Nephroselmidaceae</taxon>
        <taxon>Nephroselmis</taxon>
    </lineage>
</organism>
<name>PSAI_NEPOL</name>